<proteinExistence type="inferred from homology"/>
<organism>
    <name type="scientific">Bacillus cereus (strain ATCC 10987 / NRS 248)</name>
    <dbReference type="NCBI Taxonomy" id="222523"/>
    <lineage>
        <taxon>Bacteria</taxon>
        <taxon>Bacillati</taxon>
        <taxon>Bacillota</taxon>
        <taxon>Bacilli</taxon>
        <taxon>Bacillales</taxon>
        <taxon>Bacillaceae</taxon>
        <taxon>Bacillus</taxon>
        <taxon>Bacillus cereus group</taxon>
    </lineage>
</organism>
<sequence length="412" mass="45409">MNAEIIAVGTELLLGQIANTNAQFLSEKLASIGINVYYHTVVGDNNKRLQQAIEVAEERADMLIFTGGLGPTKDDLTKETIASSLGEELVYDENALALISDYFKRTGREFTENNKKQALVLNGANVFANDHGMAPGMGLNKNGKVYILLPGPPKEMKPMYVSYVEPFLRNFTTGENIYSRVLRFFGIGESQLEVKVQDLIDGQTNPTIAPLANDGEVTLRLTAKHQNVDEAEKLIQHVEDLILERVGEFFYGYDQEFLHYKAIELLKKKGLTLACAESLTGGLFGNQVTESAGVSSVFKGGVICYHNDVKQHVLHVPEEVLSTDGAVSKECARYLAENVKELLKADIGISFTGVAGPDASEHKEPGTVFVGLAIKDEPTVVFPLNLSGSRQQIRERSAKYGFYHLYKKLEEI</sequence>
<dbReference type="EMBL" id="AE017194">
    <property type="protein sequence ID" value="AAS42720.1"/>
    <property type="molecule type" value="Genomic_DNA"/>
</dbReference>
<dbReference type="SMR" id="Q732U5"/>
<dbReference type="KEGG" id="bca:BCE_3815"/>
<dbReference type="HOGENOM" id="CLU_030805_9_3_9"/>
<dbReference type="Proteomes" id="UP000002527">
    <property type="component" value="Chromosome"/>
</dbReference>
<dbReference type="CDD" id="cd00885">
    <property type="entry name" value="cinA"/>
    <property type="match status" value="1"/>
</dbReference>
<dbReference type="Gene3D" id="3.30.70.2860">
    <property type="match status" value="1"/>
</dbReference>
<dbReference type="Gene3D" id="3.90.950.20">
    <property type="entry name" value="CinA-like"/>
    <property type="match status" value="1"/>
</dbReference>
<dbReference type="Gene3D" id="3.40.980.10">
    <property type="entry name" value="MoaB/Mog-like domain"/>
    <property type="match status" value="1"/>
</dbReference>
<dbReference type="HAMAP" id="MF_00226_B">
    <property type="entry name" value="CinA_B"/>
    <property type="match status" value="1"/>
</dbReference>
<dbReference type="InterPro" id="IPR050101">
    <property type="entry name" value="CinA"/>
</dbReference>
<dbReference type="InterPro" id="IPR036653">
    <property type="entry name" value="CinA-like_C"/>
</dbReference>
<dbReference type="InterPro" id="IPR008136">
    <property type="entry name" value="CinA_C"/>
</dbReference>
<dbReference type="InterPro" id="IPR041424">
    <property type="entry name" value="CinA_KH"/>
</dbReference>
<dbReference type="InterPro" id="IPR008135">
    <property type="entry name" value="Competence-induced_CinA"/>
</dbReference>
<dbReference type="InterPro" id="IPR036425">
    <property type="entry name" value="MoaB/Mog-like_dom_sf"/>
</dbReference>
<dbReference type="InterPro" id="IPR001453">
    <property type="entry name" value="MoaB/Mog_dom"/>
</dbReference>
<dbReference type="NCBIfam" id="TIGR00200">
    <property type="entry name" value="cinA_nterm"/>
    <property type="match status" value="1"/>
</dbReference>
<dbReference type="NCBIfam" id="TIGR00177">
    <property type="entry name" value="molyb_syn"/>
    <property type="match status" value="1"/>
</dbReference>
<dbReference type="NCBIfam" id="TIGR00199">
    <property type="entry name" value="PncC_domain"/>
    <property type="match status" value="1"/>
</dbReference>
<dbReference type="NCBIfam" id="NF001813">
    <property type="entry name" value="PRK00549.1"/>
    <property type="match status" value="1"/>
</dbReference>
<dbReference type="PANTHER" id="PTHR13939">
    <property type="entry name" value="NICOTINAMIDE-NUCLEOTIDE AMIDOHYDROLASE PNCC"/>
    <property type="match status" value="1"/>
</dbReference>
<dbReference type="PANTHER" id="PTHR13939:SF0">
    <property type="entry name" value="NMN AMIDOHYDROLASE-LIKE PROTEIN YFAY"/>
    <property type="match status" value="1"/>
</dbReference>
<dbReference type="Pfam" id="PF02464">
    <property type="entry name" value="CinA"/>
    <property type="match status" value="1"/>
</dbReference>
<dbReference type="Pfam" id="PF18146">
    <property type="entry name" value="CinA_KH"/>
    <property type="match status" value="1"/>
</dbReference>
<dbReference type="Pfam" id="PF00994">
    <property type="entry name" value="MoCF_biosynth"/>
    <property type="match status" value="1"/>
</dbReference>
<dbReference type="PIRSF" id="PIRSF006728">
    <property type="entry name" value="CinA"/>
    <property type="match status" value="1"/>
</dbReference>
<dbReference type="SMART" id="SM00852">
    <property type="entry name" value="MoCF_biosynth"/>
    <property type="match status" value="1"/>
</dbReference>
<dbReference type="SUPFAM" id="SSF142433">
    <property type="entry name" value="CinA-like"/>
    <property type="match status" value="1"/>
</dbReference>
<dbReference type="SUPFAM" id="SSF53218">
    <property type="entry name" value="Molybdenum cofactor biosynthesis proteins"/>
    <property type="match status" value="1"/>
</dbReference>
<comment type="similarity">
    <text evidence="1">Belongs to the CinA family.</text>
</comment>
<reference key="1">
    <citation type="journal article" date="2004" name="Nucleic Acids Res.">
        <title>The genome sequence of Bacillus cereus ATCC 10987 reveals metabolic adaptations and a large plasmid related to Bacillus anthracis pXO1.</title>
        <authorList>
            <person name="Rasko D.A."/>
            <person name="Ravel J."/>
            <person name="Oekstad O.A."/>
            <person name="Helgason E."/>
            <person name="Cer R.Z."/>
            <person name="Jiang L."/>
            <person name="Shores K.A."/>
            <person name="Fouts D.E."/>
            <person name="Tourasse N.J."/>
            <person name="Angiuoli S.V."/>
            <person name="Kolonay J.F."/>
            <person name="Nelson W.C."/>
            <person name="Kolstoe A.-B."/>
            <person name="Fraser C.M."/>
            <person name="Read T.D."/>
        </authorList>
    </citation>
    <scope>NUCLEOTIDE SEQUENCE [LARGE SCALE GENOMIC DNA]</scope>
    <source>
        <strain>ATCC 10987 / NRS 248</strain>
    </source>
</reference>
<protein>
    <recommendedName>
        <fullName evidence="1">Putative competence-damage inducible protein</fullName>
    </recommendedName>
</protein>
<name>CINA_BACC1</name>
<gene>
    <name evidence="1" type="primary">cinA</name>
    <name type="ordered locus">BCE_3815</name>
</gene>
<feature type="chain" id="PRO_0000156747" description="Putative competence-damage inducible protein">
    <location>
        <begin position="1"/>
        <end position="412"/>
    </location>
</feature>
<accession>Q732U5</accession>
<evidence type="ECO:0000255" key="1">
    <source>
        <dbReference type="HAMAP-Rule" id="MF_00226"/>
    </source>
</evidence>